<sequence>MEPKRIREGYLVKKGSVFNTWKPMWVVLLEDGIEFYKKKSDNSPKGMIPLKGSTLTSPCQDFGKRMFVFKITTTKQQDHFFQAAFLEERDAWVRDIKKAIKCIEGGQKFARKSTRRSIRLPETIDLGALYLSMKDTEKGIKELNLEKDKKIFNHCFTGNCVIDWLVSNQSVRNRQEGLMIASSLLNEGYLQPAGDMSKSAVDGTAENPFLDNPDAFYYFPDSGFFCEENSSDDDVILKEEFRGVIIKQGCLLKQGHRRKNWKVRKFILREDPAYLHYYDPAGAEDPLGAIHLRGCVVTSVESNSNGRKSEEENLFEIITADEVHYFLQAATPKERTEWIRAIQMASRTGK</sequence>
<feature type="chain" id="PRO_0000053859" description="Pleckstrin">
    <location>
        <begin position="1"/>
        <end position="350"/>
    </location>
</feature>
<feature type="domain" description="PH 1" evidence="2">
    <location>
        <begin position="4"/>
        <end position="101"/>
    </location>
</feature>
<feature type="domain" description="DEP" evidence="1">
    <location>
        <begin position="136"/>
        <end position="221"/>
    </location>
</feature>
<feature type="domain" description="PH 2" evidence="2">
    <location>
        <begin position="244"/>
        <end position="347"/>
    </location>
</feature>
<feature type="modified residue" description="N6-acetyllysine" evidence="10">
    <location>
        <position position="64"/>
    </location>
</feature>
<feature type="modified residue" description="Phosphoserine; by PKC" evidence="6">
    <location>
        <position position="113"/>
    </location>
</feature>
<feature type="modified residue" description="Phosphoserine; by PKC" evidence="6 9">
    <location>
        <position position="117"/>
    </location>
</feature>
<feature type="sequence variant" id="VAR_027797" description="In dbSNP:rs17035364.">
    <original>R</original>
    <variation>W</variation>
    <location>
        <position position="5"/>
    </location>
</feature>
<feature type="sequence variant" id="VAR_005524">
    <original>W</original>
    <variation>R</variation>
    <location>
        <position position="92"/>
    </location>
</feature>
<feature type="sequence variant" id="VAR_027798" description="In dbSNP:rs3816281." evidence="4 5">
    <original>K</original>
    <variation>N</variation>
    <location>
        <position position="97"/>
    </location>
</feature>
<feature type="sequence variant" id="VAR_056666" description="In dbSNP:rs34515106.">
    <original>K</original>
    <variation>Q</variation>
    <location>
        <position position="108"/>
    </location>
</feature>
<feature type="sequence variant" id="VAR_027799" description="In dbSNP:rs1063479." evidence="3 4 5 7">
    <original>R</original>
    <variation>K</variation>
    <location>
        <position position="340"/>
    </location>
</feature>
<feature type="sequence conflict" description="In Ref. 3; CAG46876." evidence="8" ref="3">
    <original>E</original>
    <variation>G</variation>
    <location>
        <position position="284"/>
    </location>
</feature>
<feature type="strand" evidence="11">
    <location>
        <begin position="6"/>
        <end position="19"/>
    </location>
</feature>
<feature type="strand" evidence="11">
    <location>
        <begin position="22"/>
        <end position="29"/>
    </location>
</feature>
<feature type="strand" evidence="11">
    <location>
        <begin position="32"/>
        <end position="38"/>
    </location>
</feature>
<feature type="strand" evidence="11">
    <location>
        <begin position="45"/>
        <end position="52"/>
    </location>
</feature>
<feature type="strand" evidence="11">
    <location>
        <begin position="55"/>
        <end position="58"/>
    </location>
</feature>
<feature type="strand" evidence="11">
    <location>
        <begin position="65"/>
        <end position="73"/>
    </location>
</feature>
<feature type="turn" evidence="11">
    <location>
        <begin position="74"/>
        <end position="76"/>
    </location>
</feature>
<feature type="strand" evidence="11">
    <location>
        <begin position="77"/>
        <end position="82"/>
    </location>
</feature>
<feature type="helix" evidence="11">
    <location>
        <begin position="86"/>
        <end position="103"/>
    </location>
</feature>
<feature type="helix" evidence="12">
    <location>
        <begin position="126"/>
        <end position="133"/>
    </location>
</feature>
<feature type="strand" evidence="12">
    <location>
        <begin position="135"/>
        <end position="140"/>
    </location>
</feature>
<feature type="strand" evidence="16">
    <location>
        <begin position="143"/>
        <end position="147"/>
    </location>
</feature>
<feature type="strand" evidence="12">
    <location>
        <begin position="155"/>
        <end position="157"/>
    </location>
</feature>
<feature type="helix" evidence="12">
    <location>
        <begin position="158"/>
        <end position="167"/>
    </location>
</feature>
<feature type="strand" evidence="12">
    <location>
        <begin position="168"/>
        <end position="170"/>
    </location>
</feature>
<feature type="helix" evidence="12">
    <location>
        <begin position="174"/>
        <end position="187"/>
    </location>
</feature>
<feature type="strand" evidence="12">
    <location>
        <begin position="189"/>
        <end position="194"/>
    </location>
</feature>
<feature type="helix" evidence="12">
    <location>
        <begin position="195"/>
        <end position="200"/>
    </location>
</feature>
<feature type="strand" evidence="12">
    <location>
        <begin position="215"/>
        <end position="218"/>
    </location>
</feature>
<feature type="strand" evidence="16">
    <location>
        <begin position="220"/>
        <end position="222"/>
    </location>
</feature>
<feature type="strand" evidence="16">
    <location>
        <begin position="226"/>
        <end position="228"/>
    </location>
</feature>
<feature type="helix" evidence="14">
    <location>
        <begin position="239"/>
        <end position="241"/>
    </location>
</feature>
<feature type="strand" evidence="17">
    <location>
        <begin position="245"/>
        <end position="254"/>
    </location>
</feature>
<feature type="turn" evidence="17">
    <location>
        <begin position="256"/>
        <end position="258"/>
    </location>
</feature>
<feature type="strand" evidence="17">
    <location>
        <begin position="261"/>
        <end position="269"/>
    </location>
</feature>
<feature type="turn" evidence="17">
    <location>
        <begin position="270"/>
        <end position="273"/>
    </location>
</feature>
<feature type="strand" evidence="17">
    <location>
        <begin position="274"/>
        <end position="278"/>
    </location>
</feature>
<feature type="strand" evidence="15">
    <location>
        <begin position="280"/>
        <end position="282"/>
    </location>
</feature>
<feature type="strand" evidence="17">
    <location>
        <begin position="287"/>
        <end position="291"/>
    </location>
</feature>
<feature type="strand" evidence="17">
    <location>
        <begin position="296"/>
        <end position="300"/>
    </location>
</feature>
<feature type="strand" evidence="13">
    <location>
        <begin position="306"/>
        <end position="308"/>
    </location>
</feature>
<feature type="strand" evidence="17">
    <location>
        <begin position="313"/>
        <end position="318"/>
    </location>
</feature>
<feature type="strand" evidence="17">
    <location>
        <begin position="324"/>
        <end position="328"/>
    </location>
</feature>
<feature type="helix" evidence="17">
    <location>
        <begin position="332"/>
        <end position="346"/>
    </location>
</feature>
<reference key="1">
    <citation type="journal article" date="1988" name="Nature">
        <title>Molecular cloning and expression of the major protein kinase C substrate of platelets.</title>
        <authorList>
            <person name="Tyers M."/>
            <person name="Rachubinski R.A."/>
            <person name="McCaw M.L."/>
            <person name="Varrichio A.M."/>
            <person name="Shorr R.G.L."/>
            <person name="Haslam R.J."/>
            <person name="Harley C.B."/>
        </authorList>
    </citation>
    <scope>NUCLEOTIDE SEQUENCE [MRNA]</scope>
    <scope>VARIANTS ASN-97 AND LYS-340</scope>
</reference>
<reference key="2">
    <citation type="journal article" date="1989" name="J. Cell. Biochem.">
        <title>Molecular analysis of pleckstrin: the major protein kinase C substrate of platelets.</title>
        <authorList>
            <person name="Tyers M."/>
            <person name="Haslam R.J."/>
            <person name="Rachubinski R.A."/>
            <person name="Harley C.B."/>
        </authorList>
    </citation>
    <scope>NUCLEOTIDE SEQUENCE [MRNA]</scope>
    <scope>VARIANTS ASN-97 AND LYS-340</scope>
</reference>
<reference key="3">
    <citation type="submission" date="2004-06" db="EMBL/GenBank/DDBJ databases">
        <title>Cloning of human full open reading frames in Gateway(TM) system entry vector (pDONR201).</title>
        <authorList>
            <person name="Ebert L."/>
            <person name="Schick M."/>
            <person name="Neubert P."/>
            <person name="Schatten R."/>
            <person name="Henze S."/>
            <person name="Korn B."/>
        </authorList>
    </citation>
    <scope>NUCLEOTIDE SEQUENCE [LARGE SCALE MRNA]</scope>
    <scope>VARIANT LYS-340</scope>
</reference>
<reference key="4">
    <citation type="journal article" date="2004" name="Nat. Genet.">
        <title>Complete sequencing and characterization of 21,243 full-length human cDNAs.</title>
        <authorList>
            <person name="Ota T."/>
            <person name="Suzuki Y."/>
            <person name="Nishikawa T."/>
            <person name="Otsuki T."/>
            <person name="Sugiyama T."/>
            <person name="Irie R."/>
            <person name="Wakamatsu A."/>
            <person name="Hayashi K."/>
            <person name="Sato H."/>
            <person name="Nagai K."/>
            <person name="Kimura K."/>
            <person name="Makita H."/>
            <person name="Sekine M."/>
            <person name="Obayashi M."/>
            <person name="Nishi T."/>
            <person name="Shibahara T."/>
            <person name="Tanaka T."/>
            <person name="Ishii S."/>
            <person name="Yamamoto J."/>
            <person name="Saito K."/>
            <person name="Kawai Y."/>
            <person name="Isono Y."/>
            <person name="Nakamura Y."/>
            <person name="Nagahari K."/>
            <person name="Murakami K."/>
            <person name="Yasuda T."/>
            <person name="Iwayanagi T."/>
            <person name="Wagatsuma M."/>
            <person name="Shiratori A."/>
            <person name="Sudo H."/>
            <person name="Hosoiri T."/>
            <person name="Kaku Y."/>
            <person name="Kodaira H."/>
            <person name="Kondo H."/>
            <person name="Sugawara M."/>
            <person name="Takahashi M."/>
            <person name="Kanda K."/>
            <person name="Yokoi T."/>
            <person name="Furuya T."/>
            <person name="Kikkawa E."/>
            <person name="Omura Y."/>
            <person name="Abe K."/>
            <person name="Kamihara K."/>
            <person name="Katsuta N."/>
            <person name="Sato K."/>
            <person name="Tanikawa M."/>
            <person name="Yamazaki M."/>
            <person name="Ninomiya K."/>
            <person name="Ishibashi T."/>
            <person name="Yamashita H."/>
            <person name="Murakawa K."/>
            <person name="Fujimori K."/>
            <person name="Tanai H."/>
            <person name="Kimata M."/>
            <person name="Watanabe M."/>
            <person name="Hiraoka S."/>
            <person name="Chiba Y."/>
            <person name="Ishida S."/>
            <person name="Ono Y."/>
            <person name="Takiguchi S."/>
            <person name="Watanabe S."/>
            <person name="Yosida M."/>
            <person name="Hotuta T."/>
            <person name="Kusano J."/>
            <person name="Kanehori K."/>
            <person name="Takahashi-Fujii A."/>
            <person name="Hara H."/>
            <person name="Tanase T.-O."/>
            <person name="Nomura Y."/>
            <person name="Togiya S."/>
            <person name="Komai F."/>
            <person name="Hara R."/>
            <person name="Takeuchi K."/>
            <person name="Arita M."/>
            <person name="Imose N."/>
            <person name="Musashino K."/>
            <person name="Yuuki H."/>
            <person name="Oshima A."/>
            <person name="Sasaki N."/>
            <person name="Aotsuka S."/>
            <person name="Yoshikawa Y."/>
            <person name="Matsunawa H."/>
            <person name="Ichihara T."/>
            <person name="Shiohata N."/>
            <person name="Sano S."/>
            <person name="Moriya S."/>
            <person name="Momiyama H."/>
            <person name="Satoh N."/>
            <person name="Takami S."/>
            <person name="Terashima Y."/>
            <person name="Suzuki O."/>
            <person name="Nakagawa S."/>
            <person name="Senoh A."/>
            <person name="Mizoguchi H."/>
            <person name="Goto Y."/>
            <person name="Shimizu F."/>
            <person name="Wakebe H."/>
            <person name="Hishigaki H."/>
            <person name="Watanabe T."/>
            <person name="Sugiyama A."/>
            <person name="Takemoto M."/>
            <person name="Kawakami B."/>
            <person name="Yamazaki M."/>
            <person name="Watanabe K."/>
            <person name="Kumagai A."/>
            <person name="Itakura S."/>
            <person name="Fukuzumi Y."/>
            <person name="Fujimori Y."/>
            <person name="Komiyama M."/>
            <person name="Tashiro H."/>
            <person name="Tanigami A."/>
            <person name="Fujiwara T."/>
            <person name="Ono T."/>
            <person name="Yamada K."/>
            <person name="Fujii Y."/>
            <person name="Ozaki K."/>
            <person name="Hirao M."/>
            <person name="Ohmori Y."/>
            <person name="Kawabata A."/>
            <person name="Hikiji T."/>
            <person name="Kobatake N."/>
            <person name="Inagaki H."/>
            <person name="Ikema Y."/>
            <person name="Okamoto S."/>
            <person name="Okitani R."/>
            <person name="Kawakami T."/>
            <person name="Noguchi S."/>
            <person name="Itoh T."/>
            <person name="Shigeta K."/>
            <person name="Senba T."/>
            <person name="Matsumura K."/>
            <person name="Nakajima Y."/>
            <person name="Mizuno T."/>
            <person name="Morinaga M."/>
            <person name="Sasaki M."/>
            <person name="Togashi T."/>
            <person name="Oyama M."/>
            <person name="Hata H."/>
            <person name="Watanabe M."/>
            <person name="Komatsu T."/>
            <person name="Mizushima-Sugano J."/>
            <person name="Satoh T."/>
            <person name="Shirai Y."/>
            <person name="Takahashi Y."/>
            <person name="Nakagawa K."/>
            <person name="Okumura K."/>
            <person name="Nagase T."/>
            <person name="Nomura N."/>
            <person name="Kikuchi H."/>
            <person name="Masuho Y."/>
            <person name="Yamashita R."/>
            <person name="Nakai K."/>
            <person name="Yada T."/>
            <person name="Nakamura Y."/>
            <person name="Ohara O."/>
            <person name="Isogai T."/>
            <person name="Sugano S."/>
        </authorList>
    </citation>
    <scope>NUCLEOTIDE SEQUENCE [LARGE SCALE MRNA]</scope>
    <source>
        <tissue>Spleen</tissue>
    </source>
</reference>
<reference key="5">
    <citation type="journal article" date="2005" name="Nature">
        <title>Generation and annotation of the DNA sequences of human chromosomes 2 and 4.</title>
        <authorList>
            <person name="Hillier L.W."/>
            <person name="Graves T.A."/>
            <person name="Fulton R.S."/>
            <person name="Fulton L.A."/>
            <person name="Pepin K.H."/>
            <person name="Minx P."/>
            <person name="Wagner-McPherson C."/>
            <person name="Layman D."/>
            <person name="Wylie K."/>
            <person name="Sekhon M."/>
            <person name="Becker M.C."/>
            <person name="Fewell G.A."/>
            <person name="Delehaunty K.D."/>
            <person name="Miner T.L."/>
            <person name="Nash W.E."/>
            <person name="Kremitzki C."/>
            <person name="Oddy L."/>
            <person name="Du H."/>
            <person name="Sun H."/>
            <person name="Bradshaw-Cordum H."/>
            <person name="Ali J."/>
            <person name="Carter J."/>
            <person name="Cordes M."/>
            <person name="Harris A."/>
            <person name="Isak A."/>
            <person name="van Brunt A."/>
            <person name="Nguyen C."/>
            <person name="Du F."/>
            <person name="Courtney L."/>
            <person name="Kalicki J."/>
            <person name="Ozersky P."/>
            <person name="Abbott S."/>
            <person name="Armstrong J."/>
            <person name="Belter E.A."/>
            <person name="Caruso L."/>
            <person name="Cedroni M."/>
            <person name="Cotton M."/>
            <person name="Davidson T."/>
            <person name="Desai A."/>
            <person name="Elliott G."/>
            <person name="Erb T."/>
            <person name="Fronick C."/>
            <person name="Gaige T."/>
            <person name="Haakenson W."/>
            <person name="Haglund K."/>
            <person name="Holmes A."/>
            <person name="Harkins R."/>
            <person name="Kim K."/>
            <person name="Kruchowski S.S."/>
            <person name="Strong C.M."/>
            <person name="Grewal N."/>
            <person name="Goyea E."/>
            <person name="Hou S."/>
            <person name="Levy A."/>
            <person name="Martinka S."/>
            <person name="Mead K."/>
            <person name="McLellan M.D."/>
            <person name="Meyer R."/>
            <person name="Randall-Maher J."/>
            <person name="Tomlinson C."/>
            <person name="Dauphin-Kohlberg S."/>
            <person name="Kozlowicz-Reilly A."/>
            <person name="Shah N."/>
            <person name="Swearengen-Shahid S."/>
            <person name="Snider J."/>
            <person name="Strong J.T."/>
            <person name="Thompson J."/>
            <person name="Yoakum M."/>
            <person name="Leonard S."/>
            <person name="Pearman C."/>
            <person name="Trani L."/>
            <person name="Radionenko M."/>
            <person name="Waligorski J.E."/>
            <person name="Wang C."/>
            <person name="Rock S.M."/>
            <person name="Tin-Wollam A.-M."/>
            <person name="Maupin R."/>
            <person name="Latreille P."/>
            <person name="Wendl M.C."/>
            <person name="Yang S.-P."/>
            <person name="Pohl C."/>
            <person name="Wallis J.W."/>
            <person name="Spieth J."/>
            <person name="Bieri T.A."/>
            <person name="Berkowicz N."/>
            <person name="Nelson J.O."/>
            <person name="Osborne J."/>
            <person name="Ding L."/>
            <person name="Meyer R."/>
            <person name="Sabo A."/>
            <person name="Shotland Y."/>
            <person name="Sinha P."/>
            <person name="Wohldmann P.E."/>
            <person name="Cook L.L."/>
            <person name="Hickenbotham M.T."/>
            <person name="Eldred J."/>
            <person name="Williams D."/>
            <person name="Jones T.A."/>
            <person name="She X."/>
            <person name="Ciccarelli F.D."/>
            <person name="Izaurralde E."/>
            <person name="Taylor J."/>
            <person name="Schmutz J."/>
            <person name="Myers R.M."/>
            <person name="Cox D.R."/>
            <person name="Huang X."/>
            <person name="McPherson J.D."/>
            <person name="Mardis E.R."/>
            <person name="Clifton S.W."/>
            <person name="Warren W.C."/>
            <person name="Chinwalla A.T."/>
            <person name="Eddy S.R."/>
            <person name="Marra M.A."/>
            <person name="Ovcharenko I."/>
            <person name="Furey T.S."/>
            <person name="Miller W."/>
            <person name="Eichler E.E."/>
            <person name="Bork P."/>
            <person name="Suyama M."/>
            <person name="Torrents D."/>
            <person name="Waterston R.H."/>
            <person name="Wilson R.K."/>
        </authorList>
    </citation>
    <scope>NUCLEOTIDE SEQUENCE [LARGE SCALE GENOMIC DNA]</scope>
</reference>
<reference key="6">
    <citation type="submission" date="2005-09" db="EMBL/GenBank/DDBJ databases">
        <authorList>
            <person name="Mural R.J."/>
            <person name="Istrail S."/>
            <person name="Sutton G.G."/>
            <person name="Florea L."/>
            <person name="Halpern A.L."/>
            <person name="Mobarry C.M."/>
            <person name="Lippert R."/>
            <person name="Walenz B."/>
            <person name="Shatkay H."/>
            <person name="Dew I."/>
            <person name="Miller J.R."/>
            <person name="Flanigan M.J."/>
            <person name="Edwards N.J."/>
            <person name="Bolanos R."/>
            <person name="Fasulo D."/>
            <person name="Halldorsson B.V."/>
            <person name="Hannenhalli S."/>
            <person name="Turner R."/>
            <person name="Yooseph S."/>
            <person name="Lu F."/>
            <person name="Nusskern D.R."/>
            <person name="Shue B.C."/>
            <person name="Zheng X.H."/>
            <person name="Zhong F."/>
            <person name="Delcher A.L."/>
            <person name="Huson D.H."/>
            <person name="Kravitz S.A."/>
            <person name="Mouchard L."/>
            <person name="Reinert K."/>
            <person name="Remington K.A."/>
            <person name="Clark A.G."/>
            <person name="Waterman M.S."/>
            <person name="Eichler E.E."/>
            <person name="Adams M.D."/>
            <person name="Hunkapiller M.W."/>
            <person name="Myers E.W."/>
            <person name="Venter J.C."/>
        </authorList>
    </citation>
    <scope>NUCLEOTIDE SEQUENCE [LARGE SCALE GENOMIC DNA]</scope>
</reference>
<reference key="7">
    <citation type="journal article" date="2004" name="Genome Res.">
        <title>The status, quality, and expansion of the NIH full-length cDNA project: the Mammalian Gene Collection (MGC).</title>
        <authorList>
            <consortium name="The MGC Project Team"/>
        </authorList>
    </citation>
    <scope>NUCLEOTIDE SEQUENCE [LARGE SCALE MRNA]</scope>
    <scope>VARIANT LYS-340</scope>
    <source>
        <tissue>Lymph</tissue>
    </source>
</reference>
<reference key="8">
    <citation type="journal article" date="1996" name="Biochem. J.">
        <title>Phosphorylation of human pleckstrin on Ser-113 and Ser-117 by protein kinase C.</title>
        <authorList>
            <person name="Craig K.L."/>
            <person name="Harley C.B."/>
        </authorList>
    </citation>
    <scope>PHOSPHORYLATION AT SER-113 AND SER-117</scope>
</reference>
<reference key="9">
    <citation type="journal article" date="2008" name="J. Proteome Res.">
        <title>Phosphorylation analysis of primary human T lymphocytes using sequential IMAC and titanium oxide enrichment.</title>
        <authorList>
            <person name="Carrascal M."/>
            <person name="Ovelleiro D."/>
            <person name="Casas V."/>
            <person name="Gay M."/>
            <person name="Abian J."/>
        </authorList>
    </citation>
    <scope>PHOSPHORYLATION [LARGE SCALE ANALYSIS] AT SER-117</scope>
    <scope>IDENTIFICATION BY MASS SPECTROMETRY [LARGE SCALE ANALYSIS]</scope>
    <source>
        <tissue>T-cell</tissue>
    </source>
</reference>
<reference key="10">
    <citation type="journal article" date="2009" name="Science">
        <title>Lysine acetylation targets protein complexes and co-regulates major cellular functions.</title>
        <authorList>
            <person name="Choudhary C."/>
            <person name="Kumar C."/>
            <person name="Gnad F."/>
            <person name="Nielsen M.L."/>
            <person name="Rehman M."/>
            <person name="Walther T.C."/>
            <person name="Olsen J.V."/>
            <person name="Mann M."/>
        </authorList>
    </citation>
    <scope>ACETYLATION [LARGE SCALE ANALYSIS] AT LYS-64</scope>
    <scope>IDENTIFICATION BY MASS SPECTROMETRY [LARGE SCALE ANALYSIS]</scope>
</reference>
<reference key="11">
    <citation type="journal article" date="2011" name="BMC Syst. Biol.">
        <title>Initial characterization of the human central proteome.</title>
        <authorList>
            <person name="Burkard T.R."/>
            <person name="Planyavsky M."/>
            <person name="Kaupe I."/>
            <person name="Breitwieser F.P."/>
            <person name="Buerckstuemmer T."/>
            <person name="Bennett K.L."/>
            <person name="Superti-Furga G."/>
            <person name="Colinge J."/>
        </authorList>
    </citation>
    <scope>IDENTIFICATION BY MASS SPECTROMETRY [LARGE SCALE ANALYSIS]</scope>
</reference>
<reference key="12">
    <citation type="journal article" date="2015" name="Proteomics">
        <title>N-terminome analysis of the human mitochondrial proteome.</title>
        <authorList>
            <person name="Vaca Jacome A.S."/>
            <person name="Rabilloud T."/>
            <person name="Schaeffer-Reiss C."/>
            <person name="Rompais M."/>
            <person name="Ayoub D."/>
            <person name="Lane L."/>
            <person name="Bairoch A."/>
            <person name="Van Dorsselaer A."/>
            <person name="Carapito C."/>
        </authorList>
    </citation>
    <scope>IDENTIFICATION BY MASS SPECTROMETRY [LARGE SCALE ANALYSIS]</scope>
</reference>
<reference key="13">
    <citation type="journal article" date="1994" name="Nature">
        <title>Solution structure of a pleckstrin-homology domain.</title>
        <authorList>
            <person name="Yoon H.S."/>
            <person name="Hajduk P.J."/>
            <person name="Petros A.M."/>
            <person name="Olejniczak E.T."/>
            <person name="Meadows R.P."/>
            <person name="Fesik S.W."/>
        </authorList>
    </citation>
    <scope>STRUCTURE BY NMR OF 1-105</scope>
</reference>
<reference key="14">
    <citation type="journal article" date="2005" name="Proteins">
        <title>Structure and dynamics of the human pleckstrin DEP domain: distinct molecular features of a novel DEP domain subfamily.</title>
        <authorList>
            <person name="Civera C."/>
            <person name="Simon B."/>
            <person name="Stier G."/>
            <person name="Sattler M."/>
            <person name="Macias M.J."/>
        </authorList>
    </citation>
    <scope>STRUCTURE BY NMR OF 121-223</scope>
</reference>
<reference key="15">
    <citation type="submission" date="2005-11" db="PDB data bank">
        <title>Solution structure of the DEP domain and of the C-terminal PH domain of human pleckstrin.</title>
        <authorList>
            <consortium name="RIKEN structural genomics initiative (RSGI)"/>
        </authorList>
    </citation>
    <scope>STRUCTURE BY NMR OF 116-350</scope>
</reference>
<dbReference type="EMBL" id="X07743">
    <property type="protein sequence ID" value="CAA30564.1"/>
    <property type="molecule type" value="mRNA"/>
</dbReference>
<dbReference type="EMBL" id="CR542056">
    <property type="protein sequence ID" value="CAG46853.1"/>
    <property type="molecule type" value="mRNA"/>
</dbReference>
<dbReference type="EMBL" id="CR542079">
    <property type="protein sequence ID" value="CAG46876.1"/>
    <property type="molecule type" value="mRNA"/>
</dbReference>
<dbReference type="EMBL" id="AK313756">
    <property type="protein sequence ID" value="BAG36495.1"/>
    <property type="molecule type" value="mRNA"/>
</dbReference>
<dbReference type="EMBL" id="AC015969">
    <property type="protein sequence ID" value="AAX93121.1"/>
    <property type="molecule type" value="Genomic_DNA"/>
</dbReference>
<dbReference type="EMBL" id="CH471053">
    <property type="protein sequence ID" value="EAW99876.1"/>
    <property type="molecule type" value="Genomic_DNA"/>
</dbReference>
<dbReference type="EMBL" id="BC018549">
    <property type="protein sequence ID" value="AAH18549.1"/>
    <property type="molecule type" value="mRNA"/>
</dbReference>
<dbReference type="CCDS" id="CCDS1887.1"/>
<dbReference type="PIR" id="S00755">
    <property type="entry name" value="S00755"/>
</dbReference>
<dbReference type="RefSeq" id="NP_002655.2">
    <property type="nucleotide sequence ID" value="NM_002664.3"/>
</dbReference>
<dbReference type="RefSeq" id="XP_054198550.1">
    <property type="nucleotide sequence ID" value="XM_054342575.1"/>
</dbReference>
<dbReference type="PDB" id="1PLS">
    <property type="method" value="NMR"/>
    <property type="chains" value="A=1-105"/>
</dbReference>
<dbReference type="PDB" id="1W4M">
    <property type="method" value="NMR"/>
    <property type="chains" value="A=121-223"/>
</dbReference>
<dbReference type="PDB" id="1X05">
    <property type="method" value="NMR"/>
    <property type="chains" value="A=235-350"/>
</dbReference>
<dbReference type="PDB" id="1XX0">
    <property type="method" value="NMR"/>
    <property type="chains" value="A=234-350"/>
</dbReference>
<dbReference type="PDB" id="1ZM0">
    <property type="method" value="X-ray"/>
    <property type="resolution" value="2.10 A"/>
    <property type="chains" value="A/B=240-350"/>
</dbReference>
<dbReference type="PDB" id="2CSO">
    <property type="method" value="NMR"/>
    <property type="chains" value="A=116-229"/>
</dbReference>
<dbReference type="PDB" id="2I5C">
    <property type="method" value="X-ray"/>
    <property type="resolution" value="1.75 A"/>
    <property type="chains" value="A/B/C=244-347"/>
</dbReference>
<dbReference type="PDB" id="2I5F">
    <property type="method" value="X-ray"/>
    <property type="resolution" value="1.35 A"/>
    <property type="chains" value="A=244-347"/>
</dbReference>
<dbReference type="PDBsum" id="1PLS"/>
<dbReference type="PDBsum" id="1W4M"/>
<dbReference type="PDBsum" id="1X05"/>
<dbReference type="PDBsum" id="1XX0"/>
<dbReference type="PDBsum" id="1ZM0"/>
<dbReference type="PDBsum" id="2CSO"/>
<dbReference type="PDBsum" id="2I5C"/>
<dbReference type="PDBsum" id="2I5F"/>
<dbReference type="BMRB" id="P08567"/>
<dbReference type="SMR" id="P08567"/>
<dbReference type="BioGRID" id="111357">
    <property type="interactions" value="9"/>
</dbReference>
<dbReference type="FunCoup" id="P08567">
    <property type="interactions" value="234"/>
</dbReference>
<dbReference type="IntAct" id="P08567">
    <property type="interactions" value="13"/>
</dbReference>
<dbReference type="MINT" id="P08567"/>
<dbReference type="STRING" id="9606.ENSP00000234313"/>
<dbReference type="ChEMBL" id="CHEMBL4523171"/>
<dbReference type="iPTMnet" id="P08567"/>
<dbReference type="PhosphoSitePlus" id="P08567"/>
<dbReference type="BioMuta" id="PLEK"/>
<dbReference type="DMDM" id="317373523"/>
<dbReference type="OGP" id="P08567"/>
<dbReference type="jPOST" id="P08567"/>
<dbReference type="MassIVE" id="P08567"/>
<dbReference type="PaxDb" id="9606-ENSP00000234313"/>
<dbReference type="PeptideAtlas" id="P08567"/>
<dbReference type="ProteomicsDB" id="52121"/>
<dbReference type="Antibodypedia" id="30933">
    <property type="antibodies" value="471 antibodies from 36 providers"/>
</dbReference>
<dbReference type="DNASU" id="5341"/>
<dbReference type="Ensembl" id="ENST00000234313.8">
    <property type="protein sequence ID" value="ENSP00000234313.7"/>
    <property type="gene ID" value="ENSG00000115956.10"/>
</dbReference>
<dbReference type="GeneID" id="5341"/>
<dbReference type="KEGG" id="hsa:5341"/>
<dbReference type="MANE-Select" id="ENST00000234313.8">
    <property type="protein sequence ID" value="ENSP00000234313.7"/>
    <property type="RefSeq nucleotide sequence ID" value="NM_002664.3"/>
    <property type="RefSeq protein sequence ID" value="NP_002655.2"/>
</dbReference>
<dbReference type="UCSC" id="uc002sen.5">
    <property type="organism name" value="human"/>
</dbReference>
<dbReference type="AGR" id="HGNC:9070"/>
<dbReference type="CTD" id="5341"/>
<dbReference type="DisGeNET" id="5341"/>
<dbReference type="GeneCards" id="PLEK"/>
<dbReference type="HGNC" id="HGNC:9070">
    <property type="gene designation" value="PLEK"/>
</dbReference>
<dbReference type="HPA" id="ENSG00000115956">
    <property type="expression patterns" value="Tissue enriched (bone)"/>
</dbReference>
<dbReference type="MIM" id="173570">
    <property type="type" value="gene"/>
</dbReference>
<dbReference type="neXtProt" id="NX_P08567"/>
<dbReference type="OpenTargets" id="ENSG00000115956"/>
<dbReference type="PharmGKB" id="PA33400"/>
<dbReference type="VEuPathDB" id="HostDB:ENSG00000115956"/>
<dbReference type="eggNOG" id="ENOG502QQIA">
    <property type="taxonomic scope" value="Eukaryota"/>
</dbReference>
<dbReference type="GeneTree" id="ENSGT00940000157885"/>
<dbReference type="HOGENOM" id="CLU_067828_0_0_1"/>
<dbReference type="InParanoid" id="P08567"/>
<dbReference type="OMA" id="GTCVIDW"/>
<dbReference type="OrthoDB" id="185175at2759"/>
<dbReference type="PAN-GO" id="P08567">
    <property type="GO annotations" value="2 GO annotations based on evolutionary models"/>
</dbReference>
<dbReference type="PhylomeDB" id="P08567"/>
<dbReference type="TreeFam" id="TF332246"/>
<dbReference type="PathwayCommons" id="P08567"/>
<dbReference type="Reactome" id="R-HSA-114608">
    <property type="pathway name" value="Platelet degranulation"/>
</dbReference>
<dbReference type="SignaLink" id="P08567"/>
<dbReference type="SIGNOR" id="P08567"/>
<dbReference type="BioGRID-ORCS" id="5341">
    <property type="hits" value="22 hits in 1150 CRISPR screens"/>
</dbReference>
<dbReference type="ChiTaRS" id="PLEK">
    <property type="organism name" value="human"/>
</dbReference>
<dbReference type="EvolutionaryTrace" id="P08567"/>
<dbReference type="GenomeRNAi" id="5341"/>
<dbReference type="Pharos" id="P08567">
    <property type="development level" value="Tbio"/>
</dbReference>
<dbReference type="PRO" id="PR:P08567"/>
<dbReference type="Proteomes" id="UP000005640">
    <property type="component" value="Chromosome 2"/>
</dbReference>
<dbReference type="RNAct" id="P08567">
    <property type="molecule type" value="protein"/>
</dbReference>
<dbReference type="Bgee" id="ENSG00000115956">
    <property type="expression patterns" value="Expressed in monocyte and 172 other cell types or tissues"/>
</dbReference>
<dbReference type="GO" id="GO:0005737">
    <property type="term" value="C:cytoplasm"/>
    <property type="evidence" value="ECO:0000314"/>
    <property type="project" value="BHF-UCL"/>
</dbReference>
<dbReference type="GO" id="GO:0005829">
    <property type="term" value="C:cytosol"/>
    <property type="evidence" value="ECO:0000304"/>
    <property type="project" value="Reactome"/>
</dbReference>
<dbReference type="GO" id="GO:0005576">
    <property type="term" value="C:extracellular region"/>
    <property type="evidence" value="ECO:0000304"/>
    <property type="project" value="Reactome"/>
</dbReference>
<dbReference type="GO" id="GO:0016020">
    <property type="term" value="C:membrane"/>
    <property type="evidence" value="ECO:0007005"/>
    <property type="project" value="UniProtKB"/>
</dbReference>
<dbReference type="GO" id="GO:0005886">
    <property type="term" value="C:plasma membrane"/>
    <property type="evidence" value="ECO:0000318"/>
    <property type="project" value="GO_Central"/>
</dbReference>
<dbReference type="GO" id="GO:0032587">
    <property type="term" value="C:ruffle membrane"/>
    <property type="evidence" value="ECO:0000314"/>
    <property type="project" value="BHF-UCL"/>
</dbReference>
<dbReference type="GO" id="GO:0043325">
    <property type="term" value="F:phosphatidylinositol-3,4-bisphosphate binding"/>
    <property type="evidence" value="ECO:0000314"/>
    <property type="project" value="BHF-UCL"/>
</dbReference>
<dbReference type="GO" id="GO:0042803">
    <property type="term" value="F:protein homodimerization activity"/>
    <property type="evidence" value="ECO:0000314"/>
    <property type="project" value="BHF-UCL"/>
</dbReference>
<dbReference type="GO" id="GO:0005080">
    <property type="term" value="F:protein kinase C binding"/>
    <property type="evidence" value="ECO:0000314"/>
    <property type="project" value="BHF-UCL"/>
</dbReference>
<dbReference type="GO" id="GO:0030036">
    <property type="term" value="P:actin cytoskeleton organization"/>
    <property type="evidence" value="ECO:0000314"/>
    <property type="project" value="BHF-UCL"/>
</dbReference>
<dbReference type="GO" id="GO:0030030">
    <property type="term" value="P:cell projection organization"/>
    <property type="evidence" value="ECO:0000314"/>
    <property type="project" value="BHF-UCL"/>
</dbReference>
<dbReference type="GO" id="GO:0030866">
    <property type="term" value="P:cortical actin cytoskeleton organization"/>
    <property type="evidence" value="ECO:0000314"/>
    <property type="project" value="BHF-UCL"/>
</dbReference>
<dbReference type="GO" id="GO:0002244">
    <property type="term" value="P:hematopoietic progenitor cell differentiation"/>
    <property type="evidence" value="ECO:0000270"/>
    <property type="project" value="BHF-UCL"/>
</dbReference>
<dbReference type="GO" id="GO:0007229">
    <property type="term" value="P:integrin-mediated signaling pathway"/>
    <property type="evidence" value="ECO:0000314"/>
    <property type="project" value="BHF-UCL"/>
</dbReference>
<dbReference type="GO" id="GO:0035556">
    <property type="term" value="P:intracellular signal transduction"/>
    <property type="evidence" value="ECO:0007669"/>
    <property type="project" value="InterPro"/>
</dbReference>
<dbReference type="GO" id="GO:0050849">
    <property type="term" value="P:negative regulation of calcium-mediated signaling"/>
    <property type="evidence" value="ECO:0000303"/>
    <property type="project" value="BHF-UCL"/>
</dbReference>
<dbReference type="GO" id="GO:0045744">
    <property type="term" value="P:negative regulation of G protein-coupled receptor signaling pathway"/>
    <property type="evidence" value="ECO:0000314"/>
    <property type="project" value="BHF-UCL"/>
</dbReference>
<dbReference type="GO" id="GO:0010920">
    <property type="term" value="P:negative regulation of inositol phosphate biosynthetic process"/>
    <property type="evidence" value="ECO:0000314"/>
    <property type="project" value="BHF-UCL"/>
</dbReference>
<dbReference type="GO" id="GO:0070495">
    <property type="term" value="P:negative regulation of thrombin-activated receptor signaling pathway"/>
    <property type="evidence" value="ECO:0000314"/>
    <property type="project" value="BHF-UCL"/>
</dbReference>
<dbReference type="GO" id="GO:0007200">
    <property type="term" value="P:phospholipase C-activating G protein-coupled receptor signaling pathway"/>
    <property type="evidence" value="ECO:0000250"/>
    <property type="project" value="BHF-UCL"/>
</dbReference>
<dbReference type="GO" id="GO:0030845">
    <property type="term" value="P:phospholipase C-inhibiting G protein-coupled receptor signaling pathway"/>
    <property type="evidence" value="ECO:0000314"/>
    <property type="project" value="BHF-UCL"/>
</dbReference>
<dbReference type="GO" id="GO:0070527">
    <property type="term" value="P:platelet aggregation"/>
    <property type="evidence" value="ECO:0007001"/>
    <property type="project" value="UniProtKB"/>
</dbReference>
<dbReference type="GO" id="GO:0002576">
    <property type="term" value="P:platelet degranulation"/>
    <property type="evidence" value="ECO:0000314"/>
    <property type="project" value="BHF-UCL"/>
</dbReference>
<dbReference type="GO" id="GO:0032233">
    <property type="term" value="P:positive regulation of actin filament bundle assembly"/>
    <property type="evidence" value="ECO:0000314"/>
    <property type="project" value="BHF-UCL"/>
</dbReference>
<dbReference type="GO" id="GO:0030836">
    <property type="term" value="P:positive regulation of actin filament depolymerization"/>
    <property type="evidence" value="ECO:0000314"/>
    <property type="project" value="BHF-UCL"/>
</dbReference>
<dbReference type="GO" id="GO:0010925">
    <property type="term" value="P:positive regulation of inositol-polyphosphate 5-phosphatase activity"/>
    <property type="evidence" value="ECO:0000314"/>
    <property type="project" value="BHF-UCL"/>
</dbReference>
<dbReference type="GO" id="GO:0033625">
    <property type="term" value="P:positive regulation of integrin activation"/>
    <property type="evidence" value="ECO:0000250"/>
    <property type="project" value="BHF-UCL"/>
</dbReference>
<dbReference type="GO" id="GO:0010572">
    <property type="term" value="P:positive regulation of platelet activation"/>
    <property type="evidence" value="ECO:0000250"/>
    <property type="project" value="BHF-UCL"/>
</dbReference>
<dbReference type="GO" id="GO:0070560">
    <property type="term" value="P:protein secretion by platelet"/>
    <property type="evidence" value="ECO:0000250"/>
    <property type="project" value="BHF-UCL"/>
</dbReference>
<dbReference type="GO" id="GO:0060305">
    <property type="term" value="P:regulation of cell diameter"/>
    <property type="evidence" value="ECO:0000314"/>
    <property type="project" value="BHF-UCL"/>
</dbReference>
<dbReference type="GO" id="GO:0031529">
    <property type="term" value="P:ruffle organization"/>
    <property type="evidence" value="ECO:0000314"/>
    <property type="project" value="BHF-UCL"/>
</dbReference>
<dbReference type="GO" id="GO:0070493">
    <property type="term" value="P:thrombin-activated receptor signaling pathway"/>
    <property type="evidence" value="ECO:0000314"/>
    <property type="project" value="BHF-UCL"/>
</dbReference>
<dbReference type="GO" id="GO:0006904">
    <property type="term" value="P:vesicle docking involved in exocytosis"/>
    <property type="evidence" value="ECO:0000250"/>
    <property type="project" value="BHF-UCL"/>
</dbReference>
<dbReference type="CDD" id="cd04445">
    <property type="entry name" value="DEP_PLEK1"/>
    <property type="match status" value="1"/>
</dbReference>
<dbReference type="CDD" id="cd13301">
    <property type="entry name" value="PH1_Pleckstrin_2"/>
    <property type="match status" value="1"/>
</dbReference>
<dbReference type="CDD" id="cd13302">
    <property type="entry name" value="PH2_Pleckstrin_2"/>
    <property type="match status" value="1"/>
</dbReference>
<dbReference type="FunFam" id="1.10.10.10:FF:000269">
    <property type="entry name" value="Pleckstrin"/>
    <property type="match status" value="1"/>
</dbReference>
<dbReference type="FunFam" id="2.30.29.30:FF:000223">
    <property type="entry name" value="Pleckstrin"/>
    <property type="match status" value="1"/>
</dbReference>
<dbReference type="FunFam" id="2.30.29.30:FF:000226">
    <property type="entry name" value="Pleckstrin"/>
    <property type="match status" value="1"/>
</dbReference>
<dbReference type="Gene3D" id="2.30.29.30">
    <property type="entry name" value="Pleckstrin-homology domain (PH domain)/Phosphotyrosine-binding domain (PTB)"/>
    <property type="match status" value="2"/>
</dbReference>
<dbReference type="Gene3D" id="1.10.10.10">
    <property type="entry name" value="Winged helix-like DNA-binding domain superfamily/Winged helix DNA-binding domain"/>
    <property type="match status" value="1"/>
</dbReference>
<dbReference type="IDEAL" id="IID00703"/>
<dbReference type="InterPro" id="IPR000591">
    <property type="entry name" value="DEP_dom"/>
</dbReference>
<dbReference type="InterPro" id="IPR011993">
    <property type="entry name" value="PH-like_dom_sf"/>
</dbReference>
<dbReference type="InterPro" id="IPR001849">
    <property type="entry name" value="PH_domain"/>
</dbReference>
<dbReference type="InterPro" id="IPR037370">
    <property type="entry name" value="Pleckstrin"/>
</dbReference>
<dbReference type="InterPro" id="IPR037371">
    <property type="entry name" value="PLEK_DEP"/>
</dbReference>
<dbReference type="InterPro" id="IPR036388">
    <property type="entry name" value="WH-like_DNA-bd_sf"/>
</dbReference>
<dbReference type="InterPro" id="IPR036390">
    <property type="entry name" value="WH_DNA-bd_sf"/>
</dbReference>
<dbReference type="PANTHER" id="PTHR12092">
    <property type="entry name" value="PLECKSTRIN"/>
    <property type="match status" value="1"/>
</dbReference>
<dbReference type="PANTHER" id="PTHR12092:SF1">
    <property type="entry name" value="PLECKSTRIN"/>
    <property type="match status" value="1"/>
</dbReference>
<dbReference type="Pfam" id="PF00610">
    <property type="entry name" value="DEP"/>
    <property type="match status" value="1"/>
</dbReference>
<dbReference type="Pfam" id="PF00169">
    <property type="entry name" value="PH"/>
    <property type="match status" value="2"/>
</dbReference>
<dbReference type="SMART" id="SM00049">
    <property type="entry name" value="DEP"/>
    <property type="match status" value="1"/>
</dbReference>
<dbReference type="SMART" id="SM00233">
    <property type="entry name" value="PH"/>
    <property type="match status" value="2"/>
</dbReference>
<dbReference type="SUPFAM" id="SSF50729">
    <property type="entry name" value="PH domain-like"/>
    <property type="match status" value="2"/>
</dbReference>
<dbReference type="SUPFAM" id="SSF46785">
    <property type="entry name" value="Winged helix' DNA-binding domain"/>
    <property type="match status" value="1"/>
</dbReference>
<dbReference type="PROSITE" id="PS50186">
    <property type="entry name" value="DEP"/>
    <property type="match status" value="1"/>
</dbReference>
<dbReference type="PROSITE" id="PS50003">
    <property type="entry name" value="PH_DOMAIN"/>
    <property type="match status" value="2"/>
</dbReference>
<proteinExistence type="evidence at protein level"/>
<keyword id="KW-0002">3D-structure</keyword>
<keyword id="KW-0007">Acetylation</keyword>
<keyword id="KW-0597">Phosphoprotein</keyword>
<keyword id="KW-1267">Proteomics identification</keyword>
<keyword id="KW-1185">Reference proteome</keyword>
<keyword id="KW-0677">Repeat</keyword>
<gene>
    <name type="primary">PLEK</name>
    <name type="synonym">P47</name>
</gene>
<organism>
    <name type="scientific">Homo sapiens</name>
    <name type="common">Human</name>
    <dbReference type="NCBI Taxonomy" id="9606"/>
    <lineage>
        <taxon>Eukaryota</taxon>
        <taxon>Metazoa</taxon>
        <taxon>Chordata</taxon>
        <taxon>Craniata</taxon>
        <taxon>Vertebrata</taxon>
        <taxon>Euteleostomi</taxon>
        <taxon>Mammalia</taxon>
        <taxon>Eutheria</taxon>
        <taxon>Euarchontoglires</taxon>
        <taxon>Primates</taxon>
        <taxon>Haplorrhini</taxon>
        <taxon>Catarrhini</taxon>
        <taxon>Hominidae</taxon>
        <taxon>Homo</taxon>
    </lineage>
</organism>
<accession>P08567</accession>
<accession>B2R9E8</accession>
<accession>Q53SU8</accession>
<accession>Q6FGM8</accession>
<accession>Q6FGQ1</accession>
<accession>Q8WV81</accession>
<protein>
    <recommendedName>
        <fullName>Pleckstrin</fullName>
    </recommendedName>
    <alternativeName>
        <fullName>Platelet 47 kDa protein</fullName>
        <shortName>p47</shortName>
    </alternativeName>
</protein>
<comment type="function">
    <text>Major protein kinase C substrate of platelets.</text>
</comment>
<comment type="interaction">
    <interactant intactId="EBI-2565501">
        <id>P08567</id>
    </interactant>
    <interactant intactId="EBI-742141">
        <id>O95810</id>
        <label>CAVIN2</label>
    </interactant>
    <organismsDiffer>false</organismsDiffer>
    <experiments>4</experiments>
</comment>
<comment type="interaction">
    <interactant intactId="EBI-2565501">
        <id>P08567</id>
    </interactant>
    <interactant intactId="EBI-8670520">
        <id>Q14642</id>
        <label>INPP5A</label>
    </interactant>
    <organismsDiffer>false</organismsDiffer>
    <experiments>4</experiments>
</comment>
<comment type="interaction">
    <interactant intactId="EBI-2565501">
        <id>P08567</id>
    </interactant>
    <interactant intactId="EBI-2515097">
        <id>Q8IWA0</id>
        <label>WDR75</label>
    </interactant>
    <organismsDiffer>false</organismsDiffer>
    <experiments>2</experiments>
</comment>
<evidence type="ECO:0000255" key="1">
    <source>
        <dbReference type="PROSITE-ProRule" id="PRU00066"/>
    </source>
</evidence>
<evidence type="ECO:0000255" key="2">
    <source>
        <dbReference type="PROSITE-ProRule" id="PRU00145"/>
    </source>
</evidence>
<evidence type="ECO:0000269" key="3">
    <source>
    </source>
</evidence>
<evidence type="ECO:0000269" key="4">
    <source>
    </source>
</evidence>
<evidence type="ECO:0000269" key="5">
    <source>
    </source>
</evidence>
<evidence type="ECO:0000269" key="6">
    <source>
    </source>
</evidence>
<evidence type="ECO:0000269" key="7">
    <source ref="3"/>
</evidence>
<evidence type="ECO:0000305" key="8"/>
<evidence type="ECO:0007744" key="9">
    <source>
    </source>
</evidence>
<evidence type="ECO:0007744" key="10">
    <source>
    </source>
</evidence>
<evidence type="ECO:0007829" key="11">
    <source>
        <dbReference type="PDB" id="1PLS"/>
    </source>
</evidence>
<evidence type="ECO:0007829" key="12">
    <source>
        <dbReference type="PDB" id="1W4M"/>
    </source>
</evidence>
<evidence type="ECO:0007829" key="13">
    <source>
        <dbReference type="PDB" id="1X05"/>
    </source>
</evidence>
<evidence type="ECO:0007829" key="14">
    <source>
        <dbReference type="PDB" id="1XX0"/>
    </source>
</evidence>
<evidence type="ECO:0007829" key="15">
    <source>
        <dbReference type="PDB" id="1ZM0"/>
    </source>
</evidence>
<evidence type="ECO:0007829" key="16">
    <source>
        <dbReference type="PDB" id="2CSO"/>
    </source>
</evidence>
<evidence type="ECO:0007829" key="17">
    <source>
        <dbReference type="PDB" id="2I5F"/>
    </source>
</evidence>
<name>PLEK_HUMAN</name>